<gene>
    <name evidence="1" type="primary">rhaS</name>
    <name type="ordered locus">ECS88_4353</name>
</gene>
<feature type="chain" id="PRO_1000200953" description="HTH-type transcriptional activator RhaS">
    <location>
        <begin position="1"/>
        <end position="278"/>
    </location>
</feature>
<feature type="domain" description="HTH araC/xylS-type" evidence="1">
    <location>
        <begin position="174"/>
        <end position="272"/>
    </location>
</feature>
<feature type="DNA-binding region" description="H-T-H motif" evidence="1">
    <location>
        <begin position="191"/>
        <end position="212"/>
    </location>
</feature>
<feature type="DNA-binding region" description="H-T-H motif" evidence="1">
    <location>
        <begin position="239"/>
        <end position="262"/>
    </location>
</feature>
<feature type="site" description="Interaction with sigma-70" evidence="1">
    <location>
        <position position="241"/>
    </location>
</feature>
<feature type="site" description="Interaction with sigma-70" evidence="1">
    <location>
        <position position="250"/>
    </location>
</feature>
<evidence type="ECO:0000255" key="1">
    <source>
        <dbReference type="HAMAP-Rule" id="MF_01534"/>
    </source>
</evidence>
<sequence>MTVLHSVDFFPSGNASVAIEPRLPQADFPEHHHDFHEIVIVEHGTGIHVFNGQPYTITGGTVCFVRDHDRHLYEHTDNLCLTNVLYRSPDRFQFLAGLNQLLPQEQDGQYPSHWRVNHSVLQQVRQLVAQMEQQEEENDLPSTASREILFMQLLLLLRKSSLQENLENSASRLNLLLAWLEDHFADEVNWDAVADQFSLSLRTLHRQLKQKTGLTPQRYLNRLRLMKARHLLRHSEASVTDIAYRCGFSDSNHFSTLFRREFNWSPRDIRQGRDGFLQ</sequence>
<comment type="function">
    <text evidence="1">Activates expression of the rhaBAD and rhaT operons.</text>
</comment>
<comment type="subunit">
    <text evidence="1">Binds DNA as a dimer.</text>
</comment>
<comment type="subcellular location">
    <subcellularLocation>
        <location evidence="1">Cytoplasm</location>
    </subcellularLocation>
</comment>
<dbReference type="EMBL" id="CU928161">
    <property type="protein sequence ID" value="CAR05535.1"/>
    <property type="molecule type" value="Genomic_DNA"/>
</dbReference>
<dbReference type="RefSeq" id="WP_000217149.1">
    <property type="nucleotide sequence ID" value="NC_011742.1"/>
</dbReference>
<dbReference type="SMR" id="B7MI37"/>
<dbReference type="KEGG" id="ecz:ECS88_4353"/>
<dbReference type="HOGENOM" id="CLU_000445_88_5_6"/>
<dbReference type="Proteomes" id="UP000000747">
    <property type="component" value="Chromosome"/>
</dbReference>
<dbReference type="GO" id="GO:0005737">
    <property type="term" value="C:cytoplasm"/>
    <property type="evidence" value="ECO:0007669"/>
    <property type="project" value="UniProtKB-SubCell"/>
</dbReference>
<dbReference type="GO" id="GO:0003700">
    <property type="term" value="F:DNA-binding transcription factor activity"/>
    <property type="evidence" value="ECO:0007669"/>
    <property type="project" value="UniProtKB-UniRule"/>
</dbReference>
<dbReference type="GO" id="GO:0043565">
    <property type="term" value="F:sequence-specific DNA binding"/>
    <property type="evidence" value="ECO:0007669"/>
    <property type="project" value="InterPro"/>
</dbReference>
<dbReference type="GO" id="GO:0045893">
    <property type="term" value="P:positive regulation of DNA-templated transcription"/>
    <property type="evidence" value="ECO:0007669"/>
    <property type="project" value="UniProtKB-UniRule"/>
</dbReference>
<dbReference type="GO" id="GO:0019299">
    <property type="term" value="P:rhamnose metabolic process"/>
    <property type="evidence" value="ECO:0007669"/>
    <property type="project" value="UniProtKB-UniRule"/>
</dbReference>
<dbReference type="CDD" id="cd06977">
    <property type="entry name" value="cupin_RhaR_RhaS-like_N"/>
    <property type="match status" value="1"/>
</dbReference>
<dbReference type="FunFam" id="1.10.10.60:FF:000181">
    <property type="entry name" value="HTH-type transcriptional activator RhaS"/>
    <property type="match status" value="1"/>
</dbReference>
<dbReference type="FunFam" id="2.60.120.10:FF:000041">
    <property type="entry name" value="HTH-type transcriptional activator RhaS"/>
    <property type="match status" value="1"/>
</dbReference>
<dbReference type="Gene3D" id="1.10.10.60">
    <property type="entry name" value="Homeodomain-like"/>
    <property type="match status" value="1"/>
</dbReference>
<dbReference type="Gene3D" id="2.60.120.10">
    <property type="entry name" value="Jelly Rolls"/>
    <property type="match status" value="1"/>
</dbReference>
<dbReference type="HAMAP" id="MF_01534">
    <property type="entry name" value="HTH_type_RhaS"/>
    <property type="match status" value="1"/>
</dbReference>
<dbReference type="InterPro" id="IPR003313">
    <property type="entry name" value="AraC-bd"/>
</dbReference>
<dbReference type="InterPro" id="IPR050204">
    <property type="entry name" value="AraC_XylS_family_regulators"/>
</dbReference>
<dbReference type="InterPro" id="IPR009057">
    <property type="entry name" value="Homeodomain-like_sf"/>
</dbReference>
<dbReference type="InterPro" id="IPR037923">
    <property type="entry name" value="HTH-like"/>
</dbReference>
<dbReference type="InterPro" id="IPR018060">
    <property type="entry name" value="HTH_AraC"/>
</dbReference>
<dbReference type="InterPro" id="IPR018062">
    <property type="entry name" value="HTH_AraC-typ_CS"/>
</dbReference>
<dbReference type="InterPro" id="IPR047220">
    <property type="entry name" value="RhaR_RhaS-like_N"/>
</dbReference>
<dbReference type="InterPro" id="IPR014710">
    <property type="entry name" value="RmlC-like_jellyroll"/>
</dbReference>
<dbReference type="InterPro" id="IPR020449">
    <property type="entry name" value="Tscrpt_reg_AraC-type_HTH"/>
</dbReference>
<dbReference type="InterPro" id="IPR023609">
    <property type="entry name" value="Tscrpt_reg_HTH_RhaS"/>
</dbReference>
<dbReference type="NCBIfam" id="NF010028">
    <property type="entry name" value="PRK13503.1"/>
    <property type="match status" value="1"/>
</dbReference>
<dbReference type="PANTHER" id="PTHR46796:SF13">
    <property type="entry name" value="HTH-TYPE TRANSCRIPTIONAL ACTIVATOR RHAS"/>
    <property type="match status" value="1"/>
</dbReference>
<dbReference type="PANTHER" id="PTHR46796">
    <property type="entry name" value="HTH-TYPE TRANSCRIPTIONAL ACTIVATOR RHAS-RELATED"/>
    <property type="match status" value="1"/>
</dbReference>
<dbReference type="Pfam" id="PF02311">
    <property type="entry name" value="AraC_binding"/>
    <property type="match status" value="1"/>
</dbReference>
<dbReference type="Pfam" id="PF12833">
    <property type="entry name" value="HTH_18"/>
    <property type="match status" value="1"/>
</dbReference>
<dbReference type="PRINTS" id="PR00032">
    <property type="entry name" value="HTHARAC"/>
</dbReference>
<dbReference type="SMART" id="SM00342">
    <property type="entry name" value="HTH_ARAC"/>
    <property type="match status" value="1"/>
</dbReference>
<dbReference type="SUPFAM" id="SSF46689">
    <property type="entry name" value="Homeodomain-like"/>
    <property type="match status" value="2"/>
</dbReference>
<dbReference type="SUPFAM" id="SSF51215">
    <property type="entry name" value="Regulatory protein AraC"/>
    <property type="match status" value="1"/>
</dbReference>
<dbReference type="PROSITE" id="PS00041">
    <property type="entry name" value="HTH_ARAC_FAMILY_1"/>
    <property type="match status" value="1"/>
</dbReference>
<dbReference type="PROSITE" id="PS01124">
    <property type="entry name" value="HTH_ARAC_FAMILY_2"/>
    <property type="match status" value="1"/>
</dbReference>
<reference key="1">
    <citation type="journal article" date="2009" name="PLoS Genet.">
        <title>Organised genome dynamics in the Escherichia coli species results in highly diverse adaptive paths.</title>
        <authorList>
            <person name="Touchon M."/>
            <person name="Hoede C."/>
            <person name="Tenaillon O."/>
            <person name="Barbe V."/>
            <person name="Baeriswyl S."/>
            <person name="Bidet P."/>
            <person name="Bingen E."/>
            <person name="Bonacorsi S."/>
            <person name="Bouchier C."/>
            <person name="Bouvet O."/>
            <person name="Calteau A."/>
            <person name="Chiapello H."/>
            <person name="Clermont O."/>
            <person name="Cruveiller S."/>
            <person name="Danchin A."/>
            <person name="Diard M."/>
            <person name="Dossat C."/>
            <person name="Karoui M.E."/>
            <person name="Frapy E."/>
            <person name="Garry L."/>
            <person name="Ghigo J.M."/>
            <person name="Gilles A.M."/>
            <person name="Johnson J."/>
            <person name="Le Bouguenec C."/>
            <person name="Lescat M."/>
            <person name="Mangenot S."/>
            <person name="Martinez-Jehanne V."/>
            <person name="Matic I."/>
            <person name="Nassif X."/>
            <person name="Oztas S."/>
            <person name="Petit M.A."/>
            <person name="Pichon C."/>
            <person name="Rouy Z."/>
            <person name="Ruf C.S."/>
            <person name="Schneider D."/>
            <person name="Tourret J."/>
            <person name="Vacherie B."/>
            <person name="Vallenet D."/>
            <person name="Medigue C."/>
            <person name="Rocha E.P.C."/>
            <person name="Denamur E."/>
        </authorList>
    </citation>
    <scope>NUCLEOTIDE SEQUENCE [LARGE SCALE GENOMIC DNA]</scope>
    <source>
        <strain>S88 / ExPEC</strain>
    </source>
</reference>
<proteinExistence type="inferred from homology"/>
<name>RHAS_ECO45</name>
<protein>
    <recommendedName>
        <fullName evidence="1">HTH-type transcriptional activator RhaS</fullName>
    </recommendedName>
    <alternativeName>
        <fullName evidence="1">L-rhamnose operon regulatory protein RhaS</fullName>
    </alternativeName>
</protein>
<accession>B7MI37</accession>
<organism>
    <name type="scientific">Escherichia coli O45:K1 (strain S88 / ExPEC)</name>
    <dbReference type="NCBI Taxonomy" id="585035"/>
    <lineage>
        <taxon>Bacteria</taxon>
        <taxon>Pseudomonadati</taxon>
        <taxon>Pseudomonadota</taxon>
        <taxon>Gammaproteobacteria</taxon>
        <taxon>Enterobacterales</taxon>
        <taxon>Enterobacteriaceae</taxon>
        <taxon>Escherichia</taxon>
    </lineage>
</organism>
<keyword id="KW-0010">Activator</keyword>
<keyword id="KW-0963">Cytoplasm</keyword>
<keyword id="KW-0238">DNA-binding</keyword>
<keyword id="KW-1185">Reference proteome</keyword>
<keyword id="KW-0677">Repeat</keyword>
<keyword id="KW-0684">Rhamnose metabolism</keyword>
<keyword id="KW-0804">Transcription</keyword>
<keyword id="KW-0805">Transcription regulation</keyword>